<evidence type="ECO:0000255" key="1">
    <source>
        <dbReference type="PROSITE-ProRule" id="PRU01150"/>
    </source>
</evidence>
<evidence type="ECO:0000269" key="2">
    <source>
    </source>
</evidence>
<evidence type="ECO:0000269" key="3">
    <source>
    </source>
</evidence>
<evidence type="ECO:0000269" key="4">
    <source>
    </source>
</evidence>
<evidence type="ECO:0000269" key="5">
    <source>
    </source>
</evidence>
<evidence type="ECO:0000269" key="6">
    <source>
    </source>
</evidence>
<evidence type="ECO:0000269" key="7">
    <source>
    </source>
</evidence>
<evidence type="ECO:0000269" key="8">
    <source>
    </source>
</evidence>
<evidence type="ECO:0000305" key="9"/>
<evidence type="ECO:0007744" key="10">
    <source>
    </source>
</evidence>
<evidence type="ECO:0007829" key="11">
    <source>
        <dbReference type="PDB" id="6PCE"/>
    </source>
</evidence>
<name>COA6_HUMAN</name>
<dbReference type="EMBL" id="AL355472">
    <property type="status" value="NOT_ANNOTATED_CDS"/>
    <property type="molecule type" value="Genomic_DNA"/>
</dbReference>
<dbReference type="EMBL" id="BC025793">
    <property type="protein sequence ID" value="AAH25793.1"/>
    <property type="status" value="ALT_SEQ"/>
    <property type="molecule type" value="mRNA"/>
</dbReference>
<dbReference type="EMBL" id="BC116455">
    <property type="protein sequence ID" value="AAI16456.1"/>
    <property type="molecule type" value="mRNA"/>
</dbReference>
<dbReference type="CCDS" id="CCDS31059.1">
    <molecule id="Q5JTJ3-1"/>
</dbReference>
<dbReference type="CCDS" id="CCDS55690.1">
    <molecule id="Q5JTJ3-3"/>
</dbReference>
<dbReference type="CCDS" id="CCDS76275.1">
    <molecule id="Q5JTJ3-2"/>
</dbReference>
<dbReference type="RefSeq" id="NP_001013003.1">
    <molecule id="Q5JTJ3-1"/>
    <property type="nucleotide sequence ID" value="NM_001012985.2"/>
</dbReference>
<dbReference type="RefSeq" id="NP_001193570.2">
    <molecule id="Q5JTJ3-2"/>
    <property type="nucleotide sequence ID" value="NM_001206641.3"/>
</dbReference>
<dbReference type="RefSeq" id="NP_001288662.1">
    <molecule id="Q5JTJ3-3"/>
    <property type="nucleotide sequence ID" value="NM_001301733.1"/>
</dbReference>
<dbReference type="PDB" id="6NL3">
    <property type="method" value="NMR"/>
    <property type="chains" value="A=47-125"/>
</dbReference>
<dbReference type="PDB" id="6PCE">
    <property type="method" value="X-ray"/>
    <property type="resolution" value="1.65 A"/>
    <property type="chains" value="A/B=50-119"/>
</dbReference>
<dbReference type="PDB" id="6PCF">
    <property type="method" value="X-ray"/>
    <property type="resolution" value="2.20 A"/>
    <property type="chains" value="A/B/C/D=49-113"/>
</dbReference>
<dbReference type="PDBsum" id="6NL3"/>
<dbReference type="PDBsum" id="6PCE"/>
<dbReference type="PDBsum" id="6PCF"/>
<dbReference type="SMR" id="Q5JTJ3"/>
<dbReference type="BioGRID" id="132839">
    <property type="interactions" value="29"/>
</dbReference>
<dbReference type="FunCoup" id="Q5JTJ3">
    <property type="interactions" value="776"/>
</dbReference>
<dbReference type="IntAct" id="Q5JTJ3">
    <property type="interactions" value="14"/>
</dbReference>
<dbReference type="STRING" id="9606.ENSP00000355574"/>
<dbReference type="GlyGen" id="Q5JTJ3">
    <property type="glycosylation" value="1 site, 1 O-linked glycan (1 site)"/>
</dbReference>
<dbReference type="iPTMnet" id="Q5JTJ3"/>
<dbReference type="PhosphoSitePlus" id="Q5JTJ3"/>
<dbReference type="BioMuta" id="COA6"/>
<dbReference type="DMDM" id="74742178"/>
<dbReference type="jPOST" id="Q5JTJ3"/>
<dbReference type="MassIVE" id="Q5JTJ3"/>
<dbReference type="PaxDb" id="9606-ENSP00000355572"/>
<dbReference type="PeptideAtlas" id="Q5JTJ3"/>
<dbReference type="ProteomicsDB" id="63221">
    <molecule id="Q5JTJ3-1"/>
</dbReference>
<dbReference type="ProteomicsDB" id="63222">
    <molecule id="Q5JTJ3-2"/>
</dbReference>
<dbReference type="ProteomicsDB" id="63223">
    <molecule id="Q5JTJ3-3"/>
</dbReference>
<dbReference type="Pumba" id="Q5JTJ3"/>
<dbReference type="Antibodypedia" id="34692">
    <property type="antibodies" value="91 antibodies from 19 providers"/>
</dbReference>
<dbReference type="DNASU" id="388753"/>
<dbReference type="Ensembl" id="ENST00000366612.1">
    <molecule id="Q5JTJ3-3"/>
    <property type="protein sequence ID" value="ENSP00000355571.1"/>
    <property type="gene ID" value="ENSG00000168275.16"/>
</dbReference>
<dbReference type="Ensembl" id="ENST00000366613.1">
    <molecule id="Q5JTJ3-1"/>
    <property type="protein sequence ID" value="ENSP00000355572.1"/>
    <property type="gene ID" value="ENSG00000168275.16"/>
</dbReference>
<dbReference type="Ensembl" id="ENST00000366615.10">
    <molecule id="Q5JTJ3-2"/>
    <property type="protein sequence ID" value="ENSP00000355574.5"/>
    <property type="gene ID" value="ENSG00000168275.16"/>
</dbReference>
<dbReference type="Ensembl" id="ENST00000619305.1">
    <molecule id="Q5JTJ3-3"/>
    <property type="protein sequence ID" value="ENSP00000479686.1"/>
    <property type="gene ID" value="ENSG00000168275.16"/>
</dbReference>
<dbReference type="GeneID" id="388753"/>
<dbReference type="KEGG" id="hsa:388753"/>
<dbReference type="MANE-Select" id="ENST00000366615.10">
    <molecule id="Q5JTJ3-2"/>
    <property type="protein sequence ID" value="ENSP00000355574.5"/>
    <property type="RefSeq nucleotide sequence ID" value="NM_001206641.3"/>
    <property type="RefSeq protein sequence ID" value="NP_001193570.2"/>
</dbReference>
<dbReference type="UCSC" id="uc001hwc.4">
    <molecule id="Q5JTJ3-1"/>
    <property type="organism name" value="human"/>
</dbReference>
<dbReference type="AGR" id="HGNC:18025"/>
<dbReference type="CTD" id="388753"/>
<dbReference type="DisGeNET" id="388753"/>
<dbReference type="GeneCards" id="COA6"/>
<dbReference type="HGNC" id="HGNC:18025">
    <property type="gene designation" value="COA6"/>
</dbReference>
<dbReference type="HPA" id="ENSG00000168275">
    <property type="expression patterns" value="Low tissue specificity"/>
</dbReference>
<dbReference type="MalaCards" id="COA6"/>
<dbReference type="MIM" id="614772">
    <property type="type" value="gene"/>
</dbReference>
<dbReference type="MIM" id="616501">
    <property type="type" value="phenotype"/>
</dbReference>
<dbReference type="neXtProt" id="NX_Q5JTJ3"/>
<dbReference type="OpenTargets" id="ENSG00000168275"/>
<dbReference type="Orphanet" id="1561">
    <property type="disease" value="Fatal infantile cytochrome C oxidase deficiency"/>
</dbReference>
<dbReference type="PharmGKB" id="PA25617"/>
<dbReference type="VEuPathDB" id="HostDB:ENSG00000168275"/>
<dbReference type="eggNOG" id="KOG3057">
    <property type="taxonomic scope" value="Eukaryota"/>
</dbReference>
<dbReference type="GeneTree" id="ENSGT00390000004094"/>
<dbReference type="HOGENOM" id="CLU_142408_4_0_1"/>
<dbReference type="InParanoid" id="Q5JTJ3"/>
<dbReference type="OMA" id="DAPRCEK"/>
<dbReference type="OrthoDB" id="16284at2759"/>
<dbReference type="PAN-GO" id="Q5JTJ3">
    <property type="GO annotations" value="3 GO annotations based on evolutionary models"/>
</dbReference>
<dbReference type="PhylomeDB" id="Q5JTJ3"/>
<dbReference type="TreeFam" id="TF335992"/>
<dbReference type="PathwayCommons" id="Q5JTJ3"/>
<dbReference type="Reactome" id="R-HSA-1268020">
    <property type="pathway name" value="Mitochondrial protein import"/>
</dbReference>
<dbReference type="SignaLink" id="Q5JTJ3"/>
<dbReference type="BioGRID-ORCS" id="388753">
    <property type="hits" value="207 hits in 1162 CRISPR screens"/>
</dbReference>
<dbReference type="ChiTaRS" id="COA6">
    <property type="organism name" value="human"/>
</dbReference>
<dbReference type="GenomeRNAi" id="388753"/>
<dbReference type="Pharos" id="Q5JTJ3">
    <property type="development level" value="Tbio"/>
</dbReference>
<dbReference type="PRO" id="PR:Q5JTJ3"/>
<dbReference type="Proteomes" id="UP000005640">
    <property type="component" value="Chromosome 1"/>
</dbReference>
<dbReference type="RNAct" id="Q5JTJ3">
    <property type="molecule type" value="protein"/>
</dbReference>
<dbReference type="Bgee" id="ENSG00000168275">
    <property type="expression patterns" value="Expressed in left ventricle myocardium and 180 other cell types or tissues"/>
</dbReference>
<dbReference type="GO" id="GO:0005758">
    <property type="term" value="C:mitochondrial intermembrane space"/>
    <property type="evidence" value="ECO:0000314"/>
    <property type="project" value="UniProtKB"/>
</dbReference>
<dbReference type="GO" id="GO:0005739">
    <property type="term" value="C:mitochondrion"/>
    <property type="evidence" value="ECO:0000314"/>
    <property type="project" value="HPA"/>
</dbReference>
<dbReference type="GO" id="GO:0005654">
    <property type="term" value="C:nucleoplasm"/>
    <property type="evidence" value="ECO:0000314"/>
    <property type="project" value="HPA"/>
</dbReference>
<dbReference type="GO" id="GO:0005507">
    <property type="term" value="F:copper ion binding"/>
    <property type="evidence" value="ECO:0000314"/>
    <property type="project" value="UniProtKB"/>
</dbReference>
<dbReference type="GO" id="GO:0003723">
    <property type="term" value="F:RNA binding"/>
    <property type="evidence" value="ECO:0007005"/>
    <property type="project" value="UniProtKB"/>
</dbReference>
<dbReference type="GO" id="GO:0042775">
    <property type="term" value="P:mitochondrial ATP synthesis coupled electron transport"/>
    <property type="evidence" value="ECO:0000318"/>
    <property type="project" value="GO_Central"/>
</dbReference>
<dbReference type="GO" id="GO:0033617">
    <property type="term" value="P:mitochondrial cytochrome c oxidase assembly"/>
    <property type="evidence" value="ECO:0000315"/>
    <property type="project" value="UniProtKB"/>
</dbReference>
<dbReference type="GO" id="GO:0008535">
    <property type="term" value="P:respiratory chain complex IV assembly"/>
    <property type="evidence" value="ECO:0000314"/>
    <property type="project" value="UniProtKB"/>
</dbReference>
<dbReference type="CDD" id="cd00926">
    <property type="entry name" value="Cyt_c_Oxidase_VIb"/>
    <property type="match status" value="1"/>
</dbReference>
<dbReference type="FunFam" id="1.10.10.140:FF:000002">
    <property type="entry name" value="Cytochrome c oxidase assembly factor 6 homolog"/>
    <property type="match status" value="1"/>
</dbReference>
<dbReference type="Gene3D" id="1.10.10.140">
    <property type="entry name" value="Cytochrome c oxidase, subunit VIb"/>
    <property type="match status" value="1"/>
</dbReference>
<dbReference type="InterPro" id="IPR042289">
    <property type="entry name" value="COA6"/>
</dbReference>
<dbReference type="InterPro" id="IPR048280">
    <property type="entry name" value="COX6B-like"/>
</dbReference>
<dbReference type="InterPro" id="IPR036549">
    <property type="entry name" value="CX6/COA6-like_sf"/>
</dbReference>
<dbReference type="PANTHER" id="PTHR46690">
    <property type="entry name" value="CYTOCHROME C OXIDASE ASSEMBLY FACTOR 6 HOMOLOG"/>
    <property type="match status" value="1"/>
</dbReference>
<dbReference type="PANTHER" id="PTHR46690:SF1">
    <property type="entry name" value="CYTOCHROME C OXIDASE ASSEMBLY FACTOR 6 HOMOLOG"/>
    <property type="match status" value="1"/>
</dbReference>
<dbReference type="Pfam" id="PF02297">
    <property type="entry name" value="COX6B"/>
    <property type="match status" value="1"/>
</dbReference>
<dbReference type="SUPFAM" id="SSF47694">
    <property type="entry name" value="Cytochrome c oxidase subunit h"/>
    <property type="match status" value="1"/>
</dbReference>
<dbReference type="PROSITE" id="PS51808">
    <property type="entry name" value="CHCH"/>
    <property type="match status" value="1"/>
</dbReference>
<sequence length="125" mass="14116">MGPGGPLLSPSRGFLLCKTGWHSNRLLGDCGPHTPVSTALSFIAVGMAAPSMKERQVCWGARDEYWKCLDENLEDASQCKKLRSSFESSCPQQWIKYFDKRRDYLKFKEKFEAGQFEPSETTAKS</sequence>
<organism>
    <name type="scientific">Homo sapiens</name>
    <name type="common">Human</name>
    <dbReference type="NCBI Taxonomy" id="9606"/>
    <lineage>
        <taxon>Eukaryota</taxon>
        <taxon>Metazoa</taxon>
        <taxon>Chordata</taxon>
        <taxon>Craniata</taxon>
        <taxon>Vertebrata</taxon>
        <taxon>Euteleostomi</taxon>
        <taxon>Mammalia</taxon>
        <taxon>Eutheria</taxon>
        <taxon>Euarchontoglires</taxon>
        <taxon>Primates</taxon>
        <taxon>Haplorrhini</taxon>
        <taxon>Catarrhini</taxon>
        <taxon>Hominidae</taxon>
        <taxon>Homo</taxon>
    </lineage>
</organism>
<keyword id="KW-0002">3D-structure</keyword>
<keyword id="KW-0007">Acetylation</keyword>
<keyword id="KW-0025">Alternative splicing</keyword>
<keyword id="KW-0225">Disease variant</keyword>
<keyword id="KW-1015">Disulfide bond</keyword>
<keyword id="KW-0496">Mitochondrion</keyword>
<keyword id="KW-1274">Primary mitochondrial disease</keyword>
<keyword id="KW-1267">Proteomics identification</keyword>
<keyword id="KW-1185">Reference proteome</keyword>
<protein>
    <recommendedName>
        <fullName>Cytochrome c oxidase assembly factor 6 homolog</fullName>
    </recommendedName>
</protein>
<accession>Q5JTJ3</accession>
<accession>Q5JTJ2</accession>
<accession>Q5JTJ4</accession>
<accession>Q8TA88</accession>
<gene>
    <name type="primary">COA6</name>
    <name type="synonym">C1orf31</name>
</gene>
<feature type="chain" id="PRO_0000280399" description="Cytochrome c oxidase assembly factor 6 homolog">
    <location>
        <begin position="1"/>
        <end position="125"/>
    </location>
</feature>
<feature type="domain" description="CHCH" evidence="1">
    <location>
        <begin position="55"/>
        <end position="98"/>
    </location>
</feature>
<feature type="short sequence motif" description="Cx9C motif" evidence="1">
    <location>
        <begin position="58"/>
        <end position="68"/>
    </location>
</feature>
<feature type="short sequence motif" description="Cx10C motif" evidence="1">
    <location>
        <begin position="79"/>
        <end position="90"/>
    </location>
</feature>
<feature type="disulfide bond" evidence="1">
    <location>
        <begin position="58"/>
        <end position="90"/>
    </location>
</feature>
<feature type="disulfide bond" evidence="1">
    <location>
        <begin position="68"/>
        <end position="79"/>
    </location>
</feature>
<feature type="splice variant" id="VSP_023655" description="In isoform 3." evidence="9">
    <location>
        <begin position="1"/>
        <end position="46"/>
    </location>
</feature>
<feature type="splice variant" id="VSP_023656" description="In isoform 2." evidence="9">
    <original>MGPGGPLLSPSRGFLLCKTGWHSNRLLGDCGPHTPVSTAL</original>
    <variation>MVARKGQKSPRFRRVSCFLRLGRSTLLELEPAGRPCSGRTRHRALHRRLVACVTVSSRRHRKEAGRGRAE</variation>
    <location>
        <begin position="1"/>
        <end position="40"/>
    </location>
</feature>
<feature type="sequence variant" id="VAR_075046" description="In MC4DN13; mistargeted to the mitochondrial matrix; loss of interaction with SCO2 and MT-CO2; dbSNP:rs1558123786." evidence="3 5">
    <original>W</original>
    <variation>C</variation>
    <location>
        <position position="59"/>
    </location>
</feature>
<feature type="sequence variant" id="VAR_075047" description="In MC4DN13; dbSNP:rs875989827." evidence="4">
    <original>W</original>
    <variation>R</variation>
    <location>
        <position position="66"/>
    </location>
</feature>
<feature type="helix" evidence="11">
    <location>
        <begin position="53"/>
        <end position="71"/>
    </location>
</feature>
<feature type="turn" evidence="11">
    <location>
        <begin position="72"/>
        <end position="74"/>
    </location>
</feature>
<feature type="helix" evidence="11">
    <location>
        <begin position="76"/>
        <end position="78"/>
    </location>
</feature>
<feature type="helix" evidence="11">
    <location>
        <begin position="80"/>
        <end position="89"/>
    </location>
</feature>
<feature type="helix" evidence="11">
    <location>
        <begin position="92"/>
        <end position="108"/>
    </location>
</feature>
<feature type="helix" evidence="11">
    <location>
        <begin position="112"/>
        <end position="116"/>
    </location>
</feature>
<feature type="initiator methionine" description="Removed" evidence="10">
    <location sequence="Q5JTJ3-3">
        <position position="1"/>
    </location>
</feature>
<feature type="modified residue" description="N-acetylalanine" evidence="10">
    <location sequence="Q5JTJ3-3">
        <position position="2"/>
    </location>
</feature>
<comment type="function">
    <text evidence="3 5 6">Involved in the maturation of the mitochondrial respiratory chain complex IV subunit MT-CO2/COX2. Thereby, may regulate early steps of complex IV assembly. Mitochondrial respiratory chain complex IV or cytochrome c oxidase is the component of the respiratory chain that catalyzes the transfer of electrons from intermembrane space cytochrome c to molecular oxygen in the matrix and as a consequence contributes to the proton gradient involved in mitochondrial ATP synthesis. May also be required for efficient formation of respiratory supercomplexes comprised of complexes III and IV.</text>
</comment>
<comment type="subunit">
    <text evidence="2 5 6 7 8">Interacts with COA1 (PubMed:22356826). Found in a complex with TMEM177, COX20, MT-CO2/COX2, COX18, SCO1 and SCO2 (PubMed:29154948). Interacts with MT-CO2/COX2 and SCO2 (PubMed:25959673). Interacts with SCO1 (PubMed:26160915). Interacts with COX20 in a MT-CO2/COX2- and COX18-dependent manner (PubMed:28330871, PubMed:29154948). Interacts with COX16 (PubMed:29381136).</text>
</comment>
<comment type="interaction">
    <interactant intactId="EBI-2874677">
        <id>Q5JTJ3</id>
    </interactant>
    <interactant intactId="EBI-12011224">
        <id>Q9NPB3</id>
        <label>CABP2</label>
    </interactant>
    <organismsDiffer>false</organismsDiffer>
    <experiments>3</experiments>
</comment>
<comment type="interaction">
    <interactant intactId="EBI-2874677">
        <id>Q5JTJ3</id>
    </interactant>
    <interactant intactId="EBI-740376">
        <id>Q86UW9</id>
        <label>DTX2</label>
    </interactant>
    <organismsDiffer>false</organismsDiffer>
    <experiments>3</experiments>
</comment>
<comment type="interaction">
    <interactant intactId="EBI-2874677">
        <id>Q5JTJ3</id>
    </interactant>
    <interactant intactId="EBI-948354">
        <id>Q6DKK2</id>
        <label>TTC19</label>
    </interactant>
    <organismsDiffer>false</organismsDiffer>
    <experiments>3</experiments>
</comment>
<comment type="subcellular location">
    <subcellularLocation>
        <location evidence="4 5">Mitochondrion intermembrane space</location>
    </subcellularLocation>
</comment>
<comment type="alternative products">
    <event type="alternative splicing"/>
    <isoform>
        <id>Q5JTJ3-1</id>
        <name>1</name>
        <sequence type="displayed"/>
    </isoform>
    <isoform>
        <id>Q5JTJ3-2</id>
        <name>2</name>
        <sequence type="described" ref="VSP_023656"/>
    </isoform>
    <isoform>
        <id>Q5JTJ3-3</id>
        <name>3</name>
        <sequence type="described" ref="VSP_023655"/>
    </isoform>
</comment>
<comment type="disease" evidence="3 4 5">
    <disease id="DI-04507">
        <name>Mitochondrial complex IV deficiency, nuclear type 13</name>
        <acronym>MC4DN13</acronym>
        <description>An autosomal recessive, infantile disorder with a fatal course in the first weeks of life, characterized by hypertrophic cardiomyopathy, left ventricular non-compaction, lactic acidosis, metabolic hypotonia, and mitochondrial complex IV deficiency.</description>
        <dbReference type="MIM" id="616501"/>
    </disease>
    <text>The disease is caused by variants affecting the gene represented in this entry.</text>
</comment>
<comment type="similarity">
    <text evidence="9">Belongs to the cytochrome c oxidase subunit 6B family.</text>
</comment>
<comment type="sequence caution" evidence="9">
    <conflict type="erroneous initiation">
        <sequence resource="EMBL-CDS" id="AAH25793"/>
    </conflict>
    <text>Extended N-terminus.</text>
</comment>
<comment type="sequence caution" evidence="9">
    <conflict type="miscellaneous discrepancy">
        <sequence resource="EMBL-CDS" id="AAH25793"/>
    </conflict>
    <text>Contaminating sequence.</text>
</comment>
<comment type="online information" name="LOVD-Leiden Open Variation Database">
    <link uri="https://databases.lovd.nl/shared/genes/COA6"/>
    <text>cytochrome c oxidase assembly factor 6 homolog (S.cerevisiae) (COA6)</text>
</comment>
<reference key="1">
    <citation type="journal article" date="2006" name="Nature">
        <title>The DNA sequence and biological annotation of human chromosome 1.</title>
        <authorList>
            <person name="Gregory S.G."/>
            <person name="Barlow K.F."/>
            <person name="McLay K.E."/>
            <person name="Kaul R."/>
            <person name="Swarbreck D."/>
            <person name="Dunham A."/>
            <person name="Scott C.E."/>
            <person name="Howe K.L."/>
            <person name="Woodfine K."/>
            <person name="Spencer C.C.A."/>
            <person name="Jones M.C."/>
            <person name="Gillson C."/>
            <person name="Searle S."/>
            <person name="Zhou Y."/>
            <person name="Kokocinski F."/>
            <person name="McDonald L."/>
            <person name="Evans R."/>
            <person name="Phillips K."/>
            <person name="Atkinson A."/>
            <person name="Cooper R."/>
            <person name="Jones C."/>
            <person name="Hall R.E."/>
            <person name="Andrews T.D."/>
            <person name="Lloyd C."/>
            <person name="Ainscough R."/>
            <person name="Almeida J.P."/>
            <person name="Ambrose K.D."/>
            <person name="Anderson F."/>
            <person name="Andrew R.W."/>
            <person name="Ashwell R.I.S."/>
            <person name="Aubin K."/>
            <person name="Babbage A.K."/>
            <person name="Bagguley C.L."/>
            <person name="Bailey J."/>
            <person name="Beasley H."/>
            <person name="Bethel G."/>
            <person name="Bird C.P."/>
            <person name="Bray-Allen S."/>
            <person name="Brown J.Y."/>
            <person name="Brown A.J."/>
            <person name="Buckley D."/>
            <person name="Burton J."/>
            <person name="Bye J."/>
            <person name="Carder C."/>
            <person name="Chapman J.C."/>
            <person name="Clark S.Y."/>
            <person name="Clarke G."/>
            <person name="Clee C."/>
            <person name="Cobley V."/>
            <person name="Collier R.E."/>
            <person name="Corby N."/>
            <person name="Coville G.J."/>
            <person name="Davies J."/>
            <person name="Deadman R."/>
            <person name="Dunn M."/>
            <person name="Earthrowl M."/>
            <person name="Ellington A.G."/>
            <person name="Errington H."/>
            <person name="Frankish A."/>
            <person name="Frankland J."/>
            <person name="French L."/>
            <person name="Garner P."/>
            <person name="Garnett J."/>
            <person name="Gay L."/>
            <person name="Ghori M.R.J."/>
            <person name="Gibson R."/>
            <person name="Gilby L.M."/>
            <person name="Gillett W."/>
            <person name="Glithero R.J."/>
            <person name="Grafham D.V."/>
            <person name="Griffiths C."/>
            <person name="Griffiths-Jones S."/>
            <person name="Grocock R."/>
            <person name="Hammond S."/>
            <person name="Harrison E.S.I."/>
            <person name="Hart E."/>
            <person name="Haugen E."/>
            <person name="Heath P.D."/>
            <person name="Holmes S."/>
            <person name="Holt K."/>
            <person name="Howden P.J."/>
            <person name="Hunt A.R."/>
            <person name="Hunt S.E."/>
            <person name="Hunter G."/>
            <person name="Isherwood J."/>
            <person name="James R."/>
            <person name="Johnson C."/>
            <person name="Johnson D."/>
            <person name="Joy A."/>
            <person name="Kay M."/>
            <person name="Kershaw J.K."/>
            <person name="Kibukawa M."/>
            <person name="Kimberley A.M."/>
            <person name="King A."/>
            <person name="Knights A.J."/>
            <person name="Lad H."/>
            <person name="Laird G."/>
            <person name="Lawlor S."/>
            <person name="Leongamornlert D.A."/>
            <person name="Lloyd D.M."/>
            <person name="Loveland J."/>
            <person name="Lovell J."/>
            <person name="Lush M.J."/>
            <person name="Lyne R."/>
            <person name="Martin S."/>
            <person name="Mashreghi-Mohammadi M."/>
            <person name="Matthews L."/>
            <person name="Matthews N.S.W."/>
            <person name="McLaren S."/>
            <person name="Milne S."/>
            <person name="Mistry S."/>
            <person name="Moore M.J.F."/>
            <person name="Nickerson T."/>
            <person name="O'Dell C.N."/>
            <person name="Oliver K."/>
            <person name="Palmeiri A."/>
            <person name="Palmer S.A."/>
            <person name="Parker A."/>
            <person name="Patel D."/>
            <person name="Pearce A.V."/>
            <person name="Peck A.I."/>
            <person name="Pelan S."/>
            <person name="Phelps K."/>
            <person name="Phillimore B.J."/>
            <person name="Plumb R."/>
            <person name="Rajan J."/>
            <person name="Raymond C."/>
            <person name="Rouse G."/>
            <person name="Saenphimmachak C."/>
            <person name="Sehra H.K."/>
            <person name="Sheridan E."/>
            <person name="Shownkeen R."/>
            <person name="Sims S."/>
            <person name="Skuce C.D."/>
            <person name="Smith M."/>
            <person name="Steward C."/>
            <person name="Subramanian S."/>
            <person name="Sycamore N."/>
            <person name="Tracey A."/>
            <person name="Tromans A."/>
            <person name="Van Helmond Z."/>
            <person name="Wall M."/>
            <person name="Wallis J.M."/>
            <person name="White S."/>
            <person name="Whitehead S.L."/>
            <person name="Wilkinson J.E."/>
            <person name="Willey D.L."/>
            <person name="Williams H."/>
            <person name="Wilming L."/>
            <person name="Wray P.W."/>
            <person name="Wu Z."/>
            <person name="Coulson A."/>
            <person name="Vaudin M."/>
            <person name="Sulston J.E."/>
            <person name="Durbin R.M."/>
            <person name="Hubbard T."/>
            <person name="Wooster R."/>
            <person name="Dunham I."/>
            <person name="Carter N.P."/>
            <person name="McVean G."/>
            <person name="Ross M.T."/>
            <person name="Harrow J."/>
            <person name="Olson M.V."/>
            <person name="Beck S."/>
            <person name="Rogers J."/>
            <person name="Bentley D.R."/>
        </authorList>
    </citation>
    <scope>NUCLEOTIDE SEQUENCE [LARGE SCALE GENOMIC DNA]</scope>
</reference>
<reference key="2">
    <citation type="journal article" date="2004" name="Genome Res.">
        <title>The status, quality, and expansion of the NIH full-length cDNA project: the Mammalian Gene Collection (MGC).</title>
        <authorList>
            <consortium name="The MGC Project Team"/>
        </authorList>
    </citation>
    <scope>NUCLEOTIDE SEQUENCE [LARGE SCALE MRNA] (ISOFORM 1)</scope>
    <source>
        <tissue>Ovary</tissue>
        <tissue>Testis</tissue>
    </source>
</reference>
<reference key="3">
    <citation type="journal article" date="2011" name="BMC Syst. Biol.">
        <title>Initial characterization of the human central proteome.</title>
        <authorList>
            <person name="Burkard T.R."/>
            <person name="Planyavsky M."/>
            <person name="Kaupe I."/>
            <person name="Breitwieser F.P."/>
            <person name="Buerckstuemmer T."/>
            <person name="Bennett K.L."/>
            <person name="Superti-Furga G."/>
            <person name="Colinge J."/>
        </authorList>
    </citation>
    <scope>IDENTIFICATION BY MASS SPECTROMETRY [LARGE SCALE ANALYSIS]</scope>
</reference>
<reference key="4">
    <citation type="journal article" date="2012" name="Genome Biol.">
        <title>Iterative orthology prediction uncovers new mitochondrial proteins and identifies C12orf62 as the human ortholog of COX14, a protein involved in the assembly of cytochrome c oxidase.</title>
        <authorList>
            <person name="Szklarczyk R."/>
            <person name="Wanschers B.F."/>
            <person name="Cuypers T.D."/>
            <person name="Esseling J.J."/>
            <person name="Riemersma M."/>
            <person name="van den Brand M.A."/>
            <person name="Gloerich J."/>
            <person name="Lasonder E."/>
            <person name="van den Heuvel L.P."/>
            <person name="Nijtmans L.G."/>
            <person name="Huynen M.A."/>
        </authorList>
    </citation>
    <scope>INTERACTION WITH COA1</scope>
</reference>
<reference key="5">
    <citation type="journal article" date="2012" name="Proc. Natl. Acad. Sci. U.S.A.">
        <title>N-terminal acetylome analyses and functional insights of the N-terminal acetyltransferase NatB.</title>
        <authorList>
            <person name="Van Damme P."/>
            <person name="Lasa M."/>
            <person name="Polevoda B."/>
            <person name="Gazquez C."/>
            <person name="Elosegui-Artola A."/>
            <person name="Kim D.S."/>
            <person name="De Juan-Pardo E."/>
            <person name="Demeyer K."/>
            <person name="Hole K."/>
            <person name="Larrea E."/>
            <person name="Timmerman E."/>
            <person name="Prieto J."/>
            <person name="Arnesen T."/>
            <person name="Sherman F."/>
            <person name="Gevaert K."/>
            <person name="Aldabe R."/>
        </authorList>
    </citation>
    <scope>ACETYLATION [LARGE SCALE ANALYSIS] AT ALA-2 (ISOFORM 3)</scope>
    <scope>CLEAVAGE OF INITIATOR METHIONINE [LARGE SCALE ANALYSIS] (ISOFORM 3)</scope>
    <scope>IDENTIFICATION BY MASS SPECTROMETRY [LARGE SCALE ANALYSIS]</scope>
</reference>
<reference key="6">
    <citation type="journal article" date="2014" name="Hum. Mol. Genet.">
        <title>Copper supplementation restores cytochrome c oxidase assembly defect in a mitochondrial disease model of COA6 deficiency.</title>
        <authorList>
            <person name="Ghosh A."/>
            <person name="Trivedi P.P."/>
            <person name="Timbalia S.A."/>
            <person name="Griffin A.T."/>
            <person name="Rahn J.J."/>
            <person name="Chan S.S."/>
            <person name="Gohil V.M."/>
        </authorList>
    </citation>
    <scope>FUNCTION</scope>
    <scope>INVOLVEMENT IN MC4DN13</scope>
    <scope>VARIANT MC4DN13 CYS-59</scope>
</reference>
<reference key="7">
    <citation type="journal article" date="2015" name="Cell Metab.">
        <title>Cooperation between COA6 and SCO2 in COX2 maturation during cytochrome c oxidase assembly links two mitochondrial cardiomyopathies.</title>
        <authorList>
            <person name="Pacheu-Grau D."/>
            <person name="Bareth B."/>
            <person name="Dudek J."/>
            <person name="Juris L."/>
            <person name="Voegtle F.N."/>
            <person name="Wissel M."/>
            <person name="Leary S.C."/>
            <person name="Dennerlein S."/>
            <person name="Rehling P."/>
            <person name="Deckers M."/>
        </authorList>
    </citation>
    <scope>FUNCTION</scope>
    <scope>SUBCELLULAR LOCATION</scope>
    <scope>INTERACTION WITH MT-CO2 AND SCO2</scope>
    <scope>CHARACTERIZATION OF VARIANT MC4DN13 CYS-59</scope>
</reference>
<reference key="8">
    <citation type="journal article" date="2015" name="Hum. Mol. Genet.">
        <title>COA6 is a mitochondrial complex IV assembly factor critical for biogenesis of mtDNA-encoded COX2.</title>
        <authorList>
            <person name="Stroud D.A."/>
            <person name="Maher M.J."/>
            <person name="Lindau C."/>
            <person name="Voegtle F.N."/>
            <person name="Frazier A.E."/>
            <person name="Surgenor E."/>
            <person name="Mountford H."/>
            <person name="Singh A.P."/>
            <person name="Bonas M."/>
            <person name="Oeljeklaus S."/>
            <person name="Warscheid B."/>
            <person name="Meisinger C."/>
            <person name="Thorburn D.R."/>
            <person name="Ryan M.T."/>
        </authorList>
    </citation>
    <scope>FUNCTION</scope>
    <scope>INTERACTION WITH SCO1</scope>
</reference>
<reference key="9">
    <citation type="journal article" date="2015" name="Hum. Mutat.">
        <title>Mutations in COA6 cause cytochrome c oxidase deficiency and neonatal hypertrophic cardiomyopathy.</title>
        <authorList>
            <person name="Baertling F."/>
            <person name="van den Brand M.A.M."/>
            <person name="Hertecant J.L."/>
            <person name="Al-Shamsi A."/>
            <person name="van den Heuvel L.P."/>
            <person name="Distelmaier F."/>
            <person name="Mayatepek E."/>
            <person name="Smeitink J.A."/>
            <person name="Nijtmans L.G."/>
            <person name="Rodenburg R.J."/>
        </authorList>
    </citation>
    <scope>SUBCELLULAR LOCATION</scope>
    <scope>INVOLVEMENT IN MC4DN13</scope>
    <scope>VARIANT MC4DN13 ARG-66</scope>
</reference>
<reference key="10">
    <citation type="journal article" date="2015" name="Proteomics">
        <title>N-terminome analysis of the human mitochondrial proteome.</title>
        <authorList>
            <person name="Vaca Jacome A.S."/>
            <person name="Rabilloud T."/>
            <person name="Schaeffer-Reiss C."/>
            <person name="Rompais M."/>
            <person name="Ayoub D."/>
            <person name="Lane L."/>
            <person name="Bairoch A."/>
            <person name="Van Dorsselaer A."/>
            <person name="Carapito C."/>
        </authorList>
    </citation>
    <scope>IDENTIFICATION BY MASS SPECTROMETRY [LARGE SCALE ANALYSIS]</scope>
</reference>
<reference key="11">
    <citation type="journal article" date="2017" name="Biochim. Biophys. Acta">
        <title>The mitochondrial TMEM177 associates with COX20 during COX2 biogenesis.</title>
        <authorList>
            <person name="Lorenzi I."/>
            <person name="Oeljeklaus S."/>
            <person name="Aich A."/>
            <person name="Ronsoer C."/>
            <person name="Callegari S."/>
            <person name="Dudek J."/>
            <person name="Warscheid B."/>
            <person name="Dennerlein S."/>
            <person name="Rehling P."/>
        </authorList>
    </citation>
    <scope>IDENTIFICATION IN A COMPLEX WITH TMEM177; MT-CO2; COX20; COX18; SCO1 AND SCO2</scope>
    <scope>INTERACTION WITH COX20</scope>
</reference>
<reference key="12">
    <citation type="journal article" date="2017" name="J. Biol. Chem.">
        <title>Human mitochondrial cytochrome c oxidase assembly factor COX18 acts transiently as a membrane insertase within the subunit 2 maturation module.</title>
        <authorList>
            <person name="Bourens M."/>
            <person name="Barrientos A."/>
        </authorList>
    </citation>
    <scope>INTERACTION WITH COX20</scope>
</reference>
<reference key="13">
    <citation type="journal article" date="2018" name="Elife">
        <title>COX16 promotes COX2 metallation and assembly during respiratory complex IV biogenesis.</title>
        <authorList>
            <person name="Aich A."/>
            <person name="Wang C."/>
            <person name="Chowdhury A."/>
            <person name="Ronsoer C."/>
            <person name="Pacheu-Grau D."/>
            <person name="Richter-Dennerlein R."/>
            <person name="Dennerlein S."/>
            <person name="Rehling P."/>
        </authorList>
    </citation>
    <scope>INTERACTION WITH COX16</scope>
</reference>
<proteinExistence type="evidence at protein level"/>